<keyword id="KW-1185">Reference proteome</keyword>
<keyword id="KW-0687">Ribonucleoprotein</keyword>
<keyword id="KW-0689">Ribosomal protein</keyword>
<keyword id="KW-0694">RNA-binding</keyword>
<keyword id="KW-0699">rRNA-binding</keyword>
<evidence type="ECO:0000255" key="1">
    <source>
        <dbReference type="HAMAP-Rule" id="MF_00500"/>
    </source>
</evidence>
<evidence type="ECO:0000256" key="2">
    <source>
        <dbReference type="SAM" id="MobiDB-lite"/>
    </source>
</evidence>
<evidence type="ECO:0000305" key="3"/>
<dbReference type="EMBL" id="CP001071">
    <property type="protein sequence ID" value="ACD05467.1"/>
    <property type="molecule type" value="Genomic_DNA"/>
</dbReference>
<dbReference type="RefSeq" id="WP_012420682.1">
    <property type="nucleotide sequence ID" value="NZ_CP071807.1"/>
</dbReference>
<dbReference type="SMR" id="B2UM23"/>
<dbReference type="STRING" id="349741.Amuc_1648"/>
<dbReference type="PaxDb" id="349741-Amuc_1648"/>
<dbReference type="GeneID" id="60881238"/>
<dbReference type="KEGG" id="amu:Amuc_1648"/>
<dbReference type="eggNOG" id="COG0268">
    <property type="taxonomic scope" value="Bacteria"/>
</dbReference>
<dbReference type="HOGENOM" id="CLU_160655_3_1_0"/>
<dbReference type="BioCyc" id="AMUC349741:G1GBX-1756-MONOMER"/>
<dbReference type="Proteomes" id="UP000001031">
    <property type="component" value="Chromosome"/>
</dbReference>
<dbReference type="GO" id="GO:0015935">
    <property type="term" value="C:small ribosomal subunit"/>
    <property type="evidence" value="ECO:0007669"/>
    <property type="project" value="TreeGrafter"/>
</dbReference>
<dbReference type="GO" id="GO:0070181">
    <property type="term" value="F:small ribosomal subunit rRNA binding"/>
    <property type="evidence" value="ECO:0007669"/>
    <property type="project" value="TreeGrafter"/>
</dbReference>
<dbReference type="GO" id="GO:0003735">
    <property type="term" value="F:structural constituent of ribosome"/>
    <property type="evidence" value="ECO:0007669"/>
    <property type="project" value="InterPro"/>
</dbReference>
<dbReference type="GO" id="GO:0006412">
    <property type="term" value="P:translation"/>
    <property type="evidence" value="ECO:0007669"/>
    <property type="project" value="UniProtKB-UniRule"/>
</dbReference>
<dbReference type="Gene3D" id="1.20.58.110">
    <property type="entry name" value="Ribosomal protein S20"/>
    <property type="match status" value="1"/>
</dbReference>
<dbReference type="HAMAP" id="MF_00500">
    <property type="entry name" value="Ribosomal_bS20"/>
    <property type="match status" value="1"/>
</dbReference>
<dbReference type="InterPro" id="IPR002583">
    <property type="entry name" value="Ribosomal_bS20"/>
</dbReference>
<dbReference type="InterPro" id="IPR036510">
    <property type="entry name" value="Ribosomal_bS20_sf"/>
</dbReference>
<dbReference type="NCBIfam" id="TIGR00029">
    <property type="entry name" value="S20"/>
    <property type="match status" value="1"/>
</dbReference>
<dbReference type="PANTHER" id="PTHR33398">
    <property type="entry name" value="30S RIBOSOMAL PROTEIN S20"/>
    <property type="match status" value="1"/>
</dbReference>
<dbReference type="PANTHER" id="PTHR33398:SF1">
    <property type="entry name" value="SMALL RIBOSOMAL SUBUNIT PROTEIN BS20C"/>
    <property type="match status" value="1"/>
</dbReference>
<dbReference type="Pfam" id="PF01649">
    <property type="entry name" value="Ribosomal_S20p"/>
    <property type="match status" value="1"/>
</dbReference>
<dbReference type="SUPFAM" id="SSF46992">
    <property type="entry name" value="Ribosomal protein S20"/>
    <property type="match status" value="1"/>
</dbReference>
<comment type="function">
    <text evidence="1">Binds directly to 16S ribosomal RNA.</text>
</comment>
<comment type="similarity">
    <text evidence="1">Belongs to the bacterial ribosomal protein bS20 family.</text>
</comment>
<organism>
    <name type="scientific">Akkermansia muciniphila (strain ATCC BAA-835 / DSM 22959 / JCM 33894 / BCRC 81048 / CCUG 64013 / CIP 107961 / Muc)</name>
    <dbReference type="NCBI Taxonomy" id="349741"/>
    <lineage>
        <taxon>Bacteria</taxon>
        <taxon>Pseudomonadati</taxon>
        <taxon>Verrucomicrobiota</taxon>
        <taxon>Verrucomicrobiia</taxon>
        <taxon>Verrucomicrobiales</taxon>
        <taxon>Akkermansiaceae</taxon>
        <taxon>Akkermansia</taxon>
    </lineage>
</organism>
<reference key="1">
    <citation type="journal article" date="2011" name="PLoS ONE">
        <title>The genome of Akkermansia muciniphila, a dedicated intestinal mucin degrader, and its use in exploring intestinal metagenomes.</title>
        <authorList>
            <person name="van Passel M.W."/>
            <person name="Kant R."/>
            <person name="Zoetendal E.G."/>
            <person name="Plugge C.M."/>
            <person name="Derrien M."/>
            <person name="Malfatti S.A."/>
            <person name="Chain P.S."/>
            <person name="Woyke T."/>
            <person name="Palva A."/>
            <person name="de Vos W.M."/>
            <person name="Smidt H."/>
        </authorList>
    </citation>
    <scope>NUCLEOTIDE SEQUENCE [LARGE SCALE GENOMIC DNA]</scope>
    <source>
        <strain>ATCC BAA-835 / DSM 22959 / JCM 33894 / BCRC 81048 / CCUG 64013 / CIP 107961 / Muc</strain>
    </source>
</reference>
<proteinExistence type="inferred from homology"/>
<feature type="chain" id="PRO_1000126392" description="Small ribosomal subunit protein bS20">
    <location>
        <begin position="1"/>
        <end position="87"/>
    </location>
</feature>
<feature type="region of interest" description="Disordered" evidence="2">
    <location>
        <begin position="1"/>
        <end position="26"/>
    </location>
</feature>
<feature type="compositionally biased region" description="Low complexity" evidence="2">
    <location>
        <begin position="13"/>
        <end position="23"/>
    </location>
</feature>
<protein>
    <recommendedName>
        <fullName evidence="1">Small ribosomal subunit protein bS20</fullName>
    </recommendedName>
    <alternativeName>
        <fullName evidence="3">30S ribosomal protein S20</fullName>
    </alternativeName>
</protein>
<sequence length="87" mass="9150">MANTKSALKRIRQTATRTARNRAVTSKLKTLRKKVAAAVETSDKEAAAAAYNTFSSAVDKAAKVGTIPANRAANYKSKAAKAIAKIA</sequence>
<gene>
    <name evidence="1" type="primary">rpsT</name>
    <name type="ordered locus">Amuc_1648</name>
</gene>
<name>RS20_AKKM8</name>
<accession>B2UM23</accession>